<reference key="1">
    <citation type="journal article" date="2000" name="Nature">
        <title>Sequence and analysis of chromosome 1 of the plant Arabidopsis thaliana.</title>
        <authorList>
            <person name="Theologis A."/>
            <person name="Ecker J.R."/>
            <person name="Palm C.J."/>
            <person name="Federspiel N.A."/>
            <person name="Kaul S."/>
            <person name="White O."/>
            <person name="Alonso J."/>
            <person name="Altafi H."/>
            <person name="Araujo R."/>
            <person name="Bowman C.L."/>
            <person name="Brooks S.Y."/>
            <person name="Buehler E."/>
            <person name="Chan A."/>
            <person name="Chao Q."/>
            <person name="Chen H."/>
            <person name="Cheuk R.F."/>
            <person name="Chin C.W."/>
            <person name="Chung M.K."/>
            <person name="Conn L."/>
            <person name="Conway A.B."/>
            <person name="Conway A.R."/>
            <person name="Creasy T.H."/>
            <person name="Dewar K."/>
            <person name="Dunn P."/>
            <person name="Etgu P."/>
            <person name="Feldblyum T.V."/>
            <person name="Feng J.-D."/>
            <person name="Fong B."/>
            <person name="Fujii C.Y."/>
            <person name="Gill J.E."/>
            <person name="Goldsmith A.D."/>
            <person name="Haas B."/>
            <person name="Hansen N.F."/>
            <person name="Hughes B."/>
            <person name="Huizar L."/>
            <person name="Hunter J.L."/>
            <person name="Jenkins J."/>
            <person name="Johnson-Hopson C."/>
            <person name="Khan S."/>
            <person name="Khaykin E."/>
            <person name="Kim C.J."/>
            <person name="Koo H.L."/>
            <person name="Kremenetskaia I."/>
            <person name="Kurtz D.B."/>
            <person name="Kwan A."/>
            <person name="Lam B."/>
            <person name="Langin-Hooper S."/>
            <person name="Lee A."/>
            <person name="Lee J.M."/>
            <person name="Lenz C.A."/>
            <person name="Li J.H."/>
            <person name="Li Y.-P."/>
            <person name="Lin X."/>
            <person name="Liu S.X."/>
            <person name="Liu Z.A."/>
            <person name="Luros J.S."/>
            <person name="Maiti R."/>
            <person name="Marziali A."/>
            <person name="Militscher J."/>
            <person name="Miranda M."/>
            <person name="Nguyen M."/>
            <person name="Nierman W.C."/>
            <person name="Osborne B.I."/>
            <person name="Pai G."/>
            <person name="Peterson J."/>
            <person name="Pham P.K."/>
            <person name="Rizzo M."/>
            <person name="Rooney T."/>
            <person name="Rowley D."/>
            <person name="Sakano H."/>
            <person name="Salzberg S.L."/>
            <person name="Schwartz J.R."/>
            <person name="Shinn P."/>
            <person name="Southwick A.M."/>
            <person name="Sun H."/>
            <person name="Tallon L.J."/>
            <person name="Tambunga G."/>
            <person name="Toriumi M.J."/>
            <person name="Town C.D."/>
            <person name="Utterback T."/>
            <person name="Van Aken S."/>
            <person name="Vaysberg M."/>
            <person name="Vysotskaia V.S."/>
            <person name="Walker M."/>
            <person name="Wu D."/>
            <person name="Yu G."/>
            <person name="Fraser C.M."/>
            <person name="Venter J.C."/>
            <person name="Davis R.W."/>
        </authorList>
    </citation>
    <scope>NUCLEOTIDE SEQUENCE [LARGE SCALE GENOMIC DNA]</scope>
    <source>
        <strain>cv. Columbia</strain>
    </source>
</reference>
<reference key="2">
    <citation type="journal article" date="2017" name="Plant J.">
        <title>Araport11: a complete reannotation of the Arabidopsis thaliana reference genome.</title>
        <authorList>
            <person name="Cheng C.Y."/>
            <person name="Krishnakumar V."/>
            <person name="Chan A.P."/>
            <person name="Thibaud-Nissen F."/>
            <person name="Schobel S."/>
            <person name="Town C.D."/>
        </authorList>
    </citation>
    <scope>GENOME REANNOTATION</scope>
    <source>
        <strain>cv. Columbia</strain>
    </source>
</reference>
<reference key="3">
    <citation type="journal article" date="2011" name="Plant J.">
        <title>Characterization of the Arabidopsis glycerophosphodiester phosphodiesterase (GDPD) family reveals a role of the plastid-localized AtGDPD1 in maintaining cellular phosphate homeostasis under phosphate starvation.</title>
        <authorList>
            <person name="Cheng Y."/>
            <person name="Zhou W."/>
            <person name="El Sheery N.I."/>
            <person name="Peters C."/>
            <person name="Li M."/>
            <person name="Wang X."/>
            <person name="Huang J."/>
        </authorList>
    </citation>
    <scope>TISSUE SPECIFICITY</scope>
    <scope>GENE FAMILY</scope>
    <scope>NOMENCLATURE</scope>
</reference>
<dbReference type="EC" id="3.1.4.46" evidence="1"/>
<dbReference type="EMBL" id="AC016162">
    <property type="protein sequence ID" value="AAG51889.1"/>
    <property type="status" value="ALT_SEQ"/>
    <property type="molecule type" value="Genomic_DNA"/>
</dbReference>
<dbReference type="EMBL" id="CP002684">
    <property type="protein sequence ID" value="AEE35191.1"/>
    <property type="molecule type" value="Genomic_DNA"/>
</dbReference>
<dbReference type="PIR" id="C96738">
    <property type="entry name" value="C96738"/>
</dbReference>
<dbReference type="RefSeq" id="NP_177290.3">
    <property type="nucleotide sequence ID" value="NM_105803.5"/>
</dbReference>
<dbReference type="SMR" id="F4I8H8"/>
<dbReference type="FunCoup" id="F4I8H8">
    <property type="interactions" value="12"/>
</dbReference>
<dbReference type="STRING" id="3702.F4I8H8"/>
<dbReference type="PaxDb" id="3702-AT1G71340.1"/>
<dbReference type="ProteomicsDB" id="247117"/>
<dbReference type="EnsemblPlants" id="AT1G71340.1">
    <property type="protein sequence ID" value="AT1G71340.1"/>
    <property type="gene ID" value="AT1G71340"/>
</dbReference>
<dbReference type="GeneID" id="843475"/>
<dbReference type="Gramene" id="AT1G71340.1">
    <property type="protein sequence ID" value="AT1G71340.1"/>
    <property type="gene ID" value="AT1G71340"/>
</dbReference>
<dbReference type="KEGG" id="ath:AT1G71340"/>
<dbReference type="Araport" id="AT1G71340"/>
<dbReference type="TAIR" id="AT1G71340">
    <property type="gene designation" value="GDPD4"/>
</dbReference>
<dbReference type="eggNOG" id="KOG2258">
    <property type="taxonomic scope" value="Eukaryota"/>
</dbReference>
<dbReference type="HOGENOM" id="CLU_055532_0_0_1"/>
<dbReference type="InParanoid" id="F4I8H8"/>
<dbReference type="OMA" id="QCKNCIV"/>
<dbReference type="PRO" id="PR:F4I8H8"/>
<dbReference type="Proteomes" id="UP000006548">
    <property type="component" value="Chromosome 1"/>
</dbReference>
<dbReference type="ExpressionAtlas" id="F4I8H8">
    <property type="expression patterns" value="baseline and differential"/>
</dbReference>
<dbReference type="GO" id="GO:0016020">
    <property type="term" value="C:membrane"/>
    <property type="evidence" value="ECO:0007669"/>
    <property type="project" value="UniProtKB-SubCell"/>
</dbReference>
<dbReference type="GO" id="GO:0008889">
    <property type="term" value="F:glycerophosphodiester phosphodiesterase activity"/>
    <property type="evidence" value="ECO:0007669"/>
    <property type="project" value="UniProtKB-EC"/>
</dbReference>
<dbReference type="GO" id="GO:0006071">
    <property type="term" value="P:glycerol metabolic process"/>
    <property type="evidence" value="ECO:0007669"/>
    <property type="project" value="UniProtKB-KW"/>
</dbReference>
<dbReference type="GO" id="GO:0006629">
    <property type="term" value="P:lipid metabolic process"/>
    <property type="evidence" value="ECO:0007669"/>
    <property type="project" value="InterPro"/>
</dbReference>
<dbReference type="CDD" id="cd08556">
    <property type="entry name" value="GDPD"/>
    <property type="match status" value="1"/>
</dbReference>
<dbReference type="Gene3D" id="3.20.20.190">
    <property type="entry name" value="Phosphatidylinositol (PI) phosphodiesterase"/>
    <property type="match status" value="1"/>
</dbReference>
<dbReference type="InterPro" id="IPR044236">
    <property type="entry name" value="GDPD4"/>
</dbReference>
<dbReference type="InterPro" id="IPR030395">
    <property type="entry name" value="GP_PDE_dom"/>
</dbReference>
<dbReference type="InterPro" id="IPR017946">
    <property type="entry name" value="PLC-like_Pdiesterase_TIM-brl"/>
</dbReference>
<dbReference type="PANTHER" id="PTHR47449">
    <property type="entry name" value="GLYCEROPHOSPHODIESTER PHOSPHODIESTERASE GDPD4"/>
    <property type="match status" value="1"/>
</dbReference>
<dbReference type="PANTHER" id="PTHR47449:SF2">
    <property type="entry name" value="GLYCEROPHOSPHODIESTER PHOSPHODIESTERASE GDPD4"/>
    <property type="match status" value="1"/>
</dbReference>
<dbReference type="Pfam" id="PF03009">
    <property type="entry name" value="GDPD"/>
    <property type="match status" value="1"/>
</dbReference>
<dbReference type="SUPFAM" id="SSF51695">
    <property type="entry name" value="PLC-like phosphodiesterases"/>
    <property type="match status" value="1"/>
</dbReference>
<dbReference type="PROSITE" id="PS51704">
    <property type="entry name" value="GP_PDE"/>
    <property type="match status" value="1"/>
</dbReference>
<keyword id="KW-0319">Glycerol metabolism</keyword>
<keyword id="KW-0378">Hydrolase</keyword>
<keyword id="KW-0472">Membrane</keyword>
<keyword id="KW-1185">Reference proteome</keyword>
<keyword id="KW-0812">Transmembrane</keyword>
<keyword id="KW-1133">Transmembrane helix</keyword>
<evidence type="ECO:0000250" key="1">
    <source>
        <dbReference type="UniProtKB" id="Q9SGA2"/>
    </source>
</evidence>
<evidence type="ECO:0000255" key="2"/>
<evidence type="ECO:0000269" key="3">
    <source>
    </source>
</evidence>
<evidence type="ECO:0000303" key="4">
    <source>
    </source>
</evidence>
<evidence type="ECO:0000305" key="5"/>
<evidence type="ECO:0000312" key="6">
    <source>
        <dbReference type="Araport" id="AT1G71340"/>
    </source>
</evidence>
<evidence type="ECO:0000312" key="7">
    <source>
        <dbReference type="EMBL" id="AAG51889.1"/>
    </source>
</evidence>
<evidence type="ECO:0000312" key="8">
    <source>
        <dbReference type="EMBL" id="AEE35191.1"/>
    </source>
</evidence>
<feature type="chain" id="PRO_0000430610" description="Glycerophosphodiester phosphodiesterase GDPD4">
    <location>
        <begin position="1"/>
        <end position="328"/>
    </location>
</feature>
<feature type="transmembrane region" description="Helical" evidence="2">
    <location>
        <begin position="35"/>
        <end position="55"/>
    </location>
</feature>
<feature type="domain" description="GP-PDE" evidence="2">
    <location>
        <begin position="73"/>
        <end position="312"/>
    </location>
</feature>
<proteinExistence type="evidence at transcript level"/>
<name>GDPD4_ARATH</name>
<comment type="catalytic activity">
    <reaction evidence="1">
        <text>a sn-glycero-3-phosphodiester + H2O = an alcohol + sn-glycerol 3-phosphate + H(+)</text>
        <dbReference type="Rhea" id="RHEA:12969"/>
        <dbReference type="ChEBI" id="CHEBI:15377"/>
        <dbReference type="ChEBI" id="CHEBI:15378"/>
        <dbReference type="ChEBI" id="CHEBI:30879"/>
        <dbReference type="ChEBI" id="CHEBI:57597"/>
        <dbReference type="ChEBI" id="CHEBI:83408"/>
        <dbReference type="EC" id="3.1.4.46"/>
    </reaction>
</comment>
<comment type="subcellular location">
    <subcellularLocation>
        <location evidence="2">Membrane</location>
        <topology evidence="2">Single-pass membrane protein</topology>
    </subcellularLocation>
</comment>
<comment type="tissue specificity">
    <text evidence="3">Expressed in rosette and cauline leaves.</text>
</comment>
<comment type="similarity">
    <text evidence="5">Belongs to the glycerophosphoryl diester phosphodiesterase family.</text>
</comment>
<comment type="sequence caution">
    <conflict type="erroneous gene model prediction">
        <sequence resource="EMBL-CDS" id="AAG51889"/>
    </conflict>
</comment>
<sequence>MAIFEWRHRRRPFDGGGTRRRRFFSPLYSRNFKRTILFAVIFLAIFPPLYFHFKLRRIRQIVAQKCDWLHHPPLVCAHGGDSTLAFPNTMDAYSFAIRSRVDCIEVDVSRSSDGVLFALHNRDLQRIARNSSVQVGDLSMKQIKELDVSEIVKGTLGSSRIPTLEEALALISNSVRKVILDAKVGPPMYEKGLAQDILSIIERAQCNNCIVWAKSDTLARDIIRRAPDTMVGYIVMVDPLTGARNSLLRMKGARVVGVYHPLIDEELVRVVRRRNKEVYAWTVDDADPMKRMLHLGVDAVVTSDPSMFQGLMEDLRTECLEEGFSIRT</sequence>
<accession>F4I8H8</accession>
<accession>Q9FVW0</accession>
<organism evidence="8">
    <name type="scientific">Arabidopsis thaliana</name>
    <name type="common">Mouse-ear cress</name>
    <dbReference type="NCBI Taxonomy" id="3702"/>
    <lineage>
        <taxon>Eukaryota</taxon>
        <taxon>Viridiplantae</taxon>
        <taxon>Streptophyta</taxon>
        <taxon>Embryophyta</taxon>
        <taxon>Tracheophyta</taxon>
        <taxon>Spermatophyta</taxon>
        <taxon>Magnoliopsida</taxon>
        <taxon>eudicotyledons</taxon>
        <taxon>Gunneridae</taxon>
        <taxon>Pentapetalae</taxon>
        <taxon>rosids</taxon>
        <taxon>malvids</taxon>
        <taxon>Brassicales</taxon>
        <taxon>Brassicaceae</taxon>
        <taxon>Camelineae</taxon>
        <taxon>Arabidopsis</taxon>
    </lineage>
</organism>
<gene>
    <name evidence="4" type="primary">GDPD4</name>
    <name evidence="6" type="ordered locus">At1g71340</name>
    <name evidence="7" type="ORF">F3I17.1</name>
</gene>
<protein>
    <recommendedName>
        <fullName evidence="5">Glycerophosphodiester phosphodiesterase GDPD4</fullName>
        <ecNumber evidence="1">3.1.4.46</ecNumber>
    </recommendedName>
    <alternativeName>
        <fullName evidence="4">Glycerophosphodiester phosphodiesterase 4</fullName>
        <shortName evidence="4">ATGDPD4</shortName>
    </alternativeName>
</protein>